<evidence type="ECO:0000305" key="1"/>
<sequence>IGCGRGCGGRGYGGLGYGGLGYGGLGYGGLGGGCGRGFSGGGLPVATASAAPTGLGIASENRYEGTVGVCGNLPFLGTAAVAGEFPTVGIGEILYGCGNGAVGITREGGLGYGAGYGGGYGLGYGGYGGGYGLGYGGYGGCGCGCGY</sequence>
<feature type="chain" id="PRO_0000168181" description="Chorion class B protein B.L1">
    <location>
        <begin position="1" status="less than"/>
        <end position="147"/>
    </location>
</feature>
<feature type="repeat" description="1">
    <location>
        <begin position="11"/>
        <end position="15"/>
    </location>
</feature>
<feature type="repeat" description="2">
    <location>
        <begin position="16"/>
        <end position="20"/>
    </location>
</feature>
<feature type="repeat" description="3">
    <location>
        <begin position="21"/>
        <end position="25"/>
    </location>
</feature>
<feature type="repeat" description="4">
    <location>
        <begin position="26"/>
        <end position="30"/>
    </location>
</feature>
<feature type="region of interest" description="Left arm">
    <location>
        <begin position="1"/>
        <end position="38"/>
    </location>
</feature>
<feature type="region of interest" description="4 X 5 AA tandem repeats of G-Y-G-G-L">
    <location>
        <begin position="11"/>
        <end position="30"/>
    </location>
</feature>
<feature type="region of interest" description="Central domain">
    <location>
        <begin position="39"/>
        <end position="107"/>
    </location>
</feature>
<feature type="region of interest" description="Right arm (Gly-rich tandem repeats)">
    <location>
        <begin position="108"/>
        <end position="147"/>
    </location>
</feature>
<feature type="non-terminal residue">
    <location>
        <position position="1"/>
    </location>
</feature>
<organism>
    <name type="scientific">Bombyx mori</name>
    <name type="common">Silk moth</name>
    <dbReference type="NCBI Taxonomy" id="7091"/>
    <lineage>
        <taxon>Eukaryota</taxon>
        <taxon>Metazoa</taxon>
        <taxon>Ecdysozoa</taxon>
        <taxon>Arthropoda</taxon>
        <taxon>Hexapoda</taxon>
        <taxon>Insecta</taxon>
        <taxon>Pterygota</taxon>
        <taxon>Neoptera</taxon>
        <taxon>Endopterygota</taxon>
        <taxon>Lepidoptera</taxon>
        <taxon>Glossata</taxon>
        <taxon>Ditrysia</taxon>
        <taxon>Bombycoidea</taxon>
        <taxon>Bombycidae</taxon>
        <taxon>Bombycinae</taxon>
        <taxon>Bombyx</taxon>
    </lineage>
</organism>
<reference key="1">
    <citation type="journal article" date="1983" name="EMBO J.">
        <title>Structural features of B family chorion sequences in the silkmoth Bombyx mori, and their evolutionary implications.</title>
        <authorList>
            <person name="Tsitilou S.G."/>
            <person name="Rodakis G.C."/>
            <person name="Alexopoulou M."/>
            <person name="Kafatos F.C."/>
            <person name="Ito K."/>
            <person name="Iatrou K."/>
        </authorList>
    </citation>
    <scope>NUCLEOTIDE SEQUENCE [GENOMIC DNA]</scope>
    <source>
        <strain>703</strain>
    </source>
</reference>
<protein>
    <recommendedName>
        <fullName>Chorion class B protein B.L1</fullName>
    </recommendedName>
    <alternativeName>
        <fullName>410</fullName>
    </alternativeName>
</protein>
<dbReference type="EMBL" id="X01826">
    <property type="protein sequence ID" value="CAA25964.1"/>
    <property type="molecule type" value="Genomic_DNA"/>
</dbReference>
<dbReference type="PIR" id="S04515">
    <property type="entry name" value="S04515"/>
</dbReference>
<dbReference type="STRING" id="7091.P05685"/>
<dbReference type="InParanoid" id="P05685"/>
<dbReference type="Proteomes" id="UP000005204">
    <property type="component" value="Unassembled WGS sequence"/>
</dbReference>
<dbReference type="GO" id="GO:0042600">
    <property type="term" value="C:egg chorion"/>
    <property type="evidence" value="ECO:0007669"/>
    <property type="project" value="InterPro"/>
</dbReference>
<dbReference type="GO" id="GO:0005213">
    <property type="term" value="F:structural constituent of egg chorion"/>
    <property type="evidence" value="ECO:0007669"/>
    <property type="project" value="InterPro"/>
</dbReference>
<dbReference type="GO" id="GO:0007304">
    <property type="term" value="P:chorion-containing eggshell formation"/>
    <property type="evidence" value="ECO:0007669"/>
    <property type="project" value="InterPro"/>
</dbReference>
<dbReference type="InterPro" id="IPR002635">
    <property type="entry name" value="Chorion"/>
</dbReference>
<dbReference type="Pfam" id="PF01723">
    <property type="entry name" value="Chorion_1"/>
    <property type="match status" value="1"/>
</dbReference>
<comment type="function">
    <text>This protein is one of many from the eggshell of the silk moth.</text>
</comment>
<comment type="similarity">
    <text evidence="1">Belongs to the chorion protein family.</text>
</comment>
<name>CHB4_BOMMO</name>
<proteinExistence type="inferred from homology"/>
<accession>P05685</accession>
<keyword id="KW-1185">Reference proteome</keyword>
<keyword id="KW-0677">Repeat</keyword>